<protein>
    <recommendedName>
        <fullName>Probable tartrate dehydrogenase/decarboxylase TtuC'</fullName>
        <shortName>TDH</shortName>
        <ecNumber evidence="3">1.1.1.93</ecNumber>
        <ecNumber evidence="3">4.1.1.73</ecNumber>
    </recommendedName>
    <alternativeName>
        <fullName>D-malate dehydrogenase [decarboxylating]</fullName>
        <ecNumber evidence="3">1.1.1.83</ecNumber>
    </alternativeName>
</protein>
<organism>
    <name type="scientific">Agrobacterium vitis</name>
    <name type="common">Rhizobium vitis</name>
    <dbReference type="NCBI Taxonomy" id="373"/>
    <lineage>
        <taxon>Bacteria</taxon>
        <taxon>Pseudomonadati</taxon>
        <taxon>Pseudomonadota</taxon>
        <taxon>Alphaproteobacteria</taxon>
        <taxon>Hyphomicrobiales</taxon>
        <taxon>Rhizobiaceae</taxon>
        <taxon>Rhizobium/Agrobacterium group</taxon>
        <taxon>Agrobacterium</taxon>
    </lineage>
</organism>
<sequence length="358" mass="38760">MREYKIAAIPADGIGPEVIAAGLQVLEALEQRSGDFKIHTETFDWGSDYYKKHGVMMPADGLDKLKKFDAIFFGAVGAPDVPDHITLWGLRLPICQGFDQYANVRPTKILPGITPPLRNCGPGDLDWVIVRENSEGEYSGHGGRAHRGLPEEVGTEVAIFTRVGVTRIMRYAFKLAQARPRKLLTVVTKSNAQRHGMVMWDEIAAEVATEFPDVTWDKMLVDAMTVRMTLKPETLDTIVATNLHADILSDLAGALAGSLGVAPTANIDPERRFPSMFEPIHGSAFDITGKGIANPIATFWTAAQMLEHLGERDAAARLMSAVERVTEAGILTPDVGGTANTSQVTEAVCNAIAGSNII</sequence>
<evidence type="ECO:0000250" key="1"/>
<evidence type="ECO:0000250" key="2">
    <source>
        <dbReference type="UniProtKB" id="P37412"/>
    </source>
</evidence>
<evidence type="ECO:0000250" key="3">
    <source>
        <dbReference type="UniProtKB" id="Q51945"/>
    </source>
</evidence>
<evidence type="ECO:0000305" key="4"/>
<dbReference type="EC" id="1.1.1.93" evidence="3"/>
<dbReference type="EC" id="4.1.1.73" evidence="3"/>
<dbReference type="EC" id="1.1.1.83" evidence="3"/>
<dbReference type="EMBL" id="AF010263">
    <property type="protein sequence ID" value="AAB65748.1"/>
    <property type="molecule type" value="Genomic_DNA"/>
</dbReference>
<dbReference type="RefSeq" id="WP_032489008.1">
    <property type="nucleotide sequence ID" value="NZ_WPHU01000033.1"/>
</dbReference>
<dbReference type="SMR" id="O34296"/>
<dbReference type="UniPathway" id="UPA00839">
    <property type="reaction ID" value="UER00800"/>
</dbReference>
<dbReference type="UniPathway" id="UPA00839">
    <property type="reaction ID" value="UER00801"/>
</dbReference>
<dbReference type="UniPathway" id="UPA00839">
    <property type="reaction ID" value="UER00803"/>
</dbReference>
<dbReference type="GO" id="GO:0005737">
    <property type="term" value="C:cytoplasm"/>
    <property type="evidence" value="ECO:0007669"/>
    <property type="project" value="UniProtKB-SubCell"/>
</dbReference>
<dbReference type="GO" id="GO:0046553">
    <property type="term" value="F:D-malate dehydrogenase (decarboxylating) (NAD+) activity"/>
    <property type="evidence" value="ECO:0007669"/>
    <property type="project" value="UniProtKB-EC"/>
</dbReference>
<dbReference type="GO" id="GO:0000287">
    <property type="term" value="F:magnesium ion binding"/>
    <property type="evidence" value="ECO:0007669"/>
    <property type="project" value="InterPro"/>
</dbReference>
<dbReference type="GO" id="GO:0051287">
    <property type="term" value="F:NAD binding"/>
    <property type="evidence" value="ECO:0007669"/>
    <property type="project" value="InterPro"/>
</dbReference>
<dbReference type="GO" id="GO:0050319">
    <property type="term" value="F:tartrate decarboxylase activity"/>
    <property type="evidence" value="ECO:0007669"/>
    <property type="project" value="UniProtKB-EC"/>
</dbReference>
<dbReference type="GO" id="GO:0009027">
    <property type="term" value="F:tartrate dehydrogenase activity"/>
    <property type="evidence" value="ECO:0007669"/>
    <property type="project" value="UniProtKB-EC"/>
</dbReference>
<dbReference type="Gene3D" id="3.40.718.10">
    <property type="entry name" value="Isopropylmalate Dehydrogenase"/>
    <property type="match status" value="1"/>
</dbReference>
<dbReference type="InterPro" id="IPR050501">
    <property type="entry name" value="ICDH/IPMDH"/>
</dbReference>
<dbReference type="InterPro" id="IPR019818">
    <property type="entry name" value="IsoCit/isopropylmalate_DH_CS"/>
</dbReference>
<dbReference type="InterPro" id="IPR024084">
    <property type="entry name" value="IsoPropMal-DH-like_dom"/>
</dbReference>
<dbReference type="InterPro" id="IPR011829">
    <property type="entry name" value="TTC_DH"/>
</dbReference>
<dbReference type="NCBIfam" id="TIGR02089">
    <property type="entry name" value="TTC"/>
    <property type="match status" value="1"/>
</dbReference>
<dbReference type="PANTHER" id="PTHR43275">
    <property type="entry name" value="D-MALATE DEHYDROGENASE [DECARBOXYLATING]"/>
    <property type="match status" value="1"/>
</dbReference>
<dbReference type="PANTHER" id="PTHR43275:SF1">
    <property type="entry name" value="D-MALATE DEHYDROGENASE [DECARBOXYLATING]"/>
    <property type="match status" value="1"/>
</dbReference>
<dbReference type="Pfam" id="PF00180">
    <property type="entry name" value="Iso_dh"/>
    <property type="match status" value="1"/>
</dbReference>
<dbReference type="SMART" id="SM01329">
    <property type="entry name" value="Iso_dh"/>
    <property type="match status" value="1"/>
</dbReference>
<dbReference type="SUPFAM" id="SSF53659">
    <property type="entry name" value="Isocitrate/Isopropylmalate dehydrogenase-like"/>
    <property type="match status" value="1"/>
</dbReference>
<dbReference type="PROSITE" id="PS00470">
    <property type="entry name" value="IDH_IMDH"/>
    <property type="match status" value="1"/>
</dbReference>
<proteinExistence type="evidence at transcript level"/>
<comment type="function">
    <text evidence="3">Has multiple catalytic activities. Apart from catalyzing the oxidation of (+)-tartrate to oxaloglycolate, also converts meso-tartrate to D-glycerate and catalyzes the oxidative decarboxylation of D-malate to pyruvate.</text>
</comment>
<comment type="catalytic activity">
    <reaction evidence="3">
        <text>tartrate + NAD(+) = 2-hydroxy-3-oxosuccinate + NADH + H(+)</text>
        <dbReference type="Rhea" id="RHEA:18853"/>
        <dbReference type="ChEBI" id="CHEBI:15378"/>
        <dbReference type="ChEBI" id="CHEBI:30929"/>
        <dbReference type="ChEBI" id="CHEBI:57540"/>
        <dbReference type="ChEBI" id="CHEBI:57945"/>
        <dbReference type="ChEBI" id="CHEBI:58265"/>
        <dbReference type="EC" id="1.1.1.93"/>
    </reaction>
</comment>
<comment type="catalytic activity">
    <reaction evidence="3">
        <text>(2R,3S)-tartrate + NAD(+) = 2-hydroxy-3-oxosuccinate + NADH + H(+)</text>
        <dbReference type="Rhea" id="RHEA:16457"/>
        <dbReference type="ChEBI" id="CHEBI:15378"/>
        <dbReference type="ChEBI" id="CHEBI:30928"/>
        <dbReference type="ChEBI" id="CHEBI:57540"/>
        <dbReference type="ChEBI" id="CHEBI:57945"/>
        <dbReference type="ChEBI" id="CHEBI:58265"/>
        <dbReference type="EC" id="1.1.1.93"/>
    </reaction>
</comment>
<comment type="catalytic activity">
    <reaction evidence="3">
        <text>(2R,3R)-tartrate + NAD(+) = 2-hydroxy-3-oxosuccinate + NADH + H(+)</text>
        <dbReference type="Rhea" id="RHEA:15209"/>
        <dbReference type="ChEBI" id="CHEBI:15378"/>
        <dbReference type="ChEBI" id="CHEBI:30924"/>
        <dbReference type="ChEBI" id="CHEBI:57540"/>
        <dbReference type="ChEBI" id="CHEBI:57945"/>
        <dbReference type="ChEBI" id="CHEBI:58265"/>
        <dbReference type="EC" id="1.1.1.93"/>
    </reaction>
</comment>
<comment type="catalytic activity">
    <reaction evidence="3">
        <text>(2R,3R)-tartrate + H(+) = (R)-glycerate + CO2</text>
        <dbReference type="Rhea" id="RHEA:13317"/>
        <dbReference type="ChEBI" id="CHEBI:15378"/>
        <dbReference type="ChEBI" id="CHEBI:16526"/>
        <dbReference type="ChEBI" id="CHEBI:16659"/>
        <dbReference type="ChEBI" id="CHEBI:30924"/>
        <dbReference type="EC" id="4.1.1.73"/>
    </reaction>
</comment>
<comment type="catalytic activity">
    <reaction evidence="3">
        <text>(R)-malate + NAD(+) = pyruvate + CO2 + NADH</text>
        <dbReference type="Rhea" id="RHEA:18365"/>
        <dbReference type="ChEBI" id="CHEBI:15361"/>
        <dbReference type="ChEBI" id="CHEBI:15588"/>
        <dbReference type="ChEBI" id="CHEBI:16526"/>
        <dbReference type="ChEBI" id="CHEBI:57540"/>
        <dbReference type="ChEBI" id="CHEBI:57945"/>
        <dbReference type="EC" id="1.1.1.83"/>
    </reaction>
</comment>
<comment type="cofactor">
    <cofactor evidence="3">
        <name>Mg(2+)</name>
        <dbReference type="ChEBI" id="CHEBI:18420"/>
    </cofactor>
    <cofactor evidence="3">
        <name>Mn(2+)</name>
        <dbReference type="ChEBI" id="CHEBI:29035"/>
    </cofactor>
    <text evidence="2">Binds 1 Mg(2+) or Mn(2+) ion per subunit.</text>
</comment>
<comment type="cofactor">
    <cofactor evidence="3">
        <name>K(+)</name>
        <dbReference type="ChEBI" id="CHEBI:29103"/>
    </cofactor>
</comment>
<comment type="pathway">
    <text>Carbohydrate acid metabolism; tartrate degradation; 2-hydroxy-3-oxosuccinate from L-tartrate: step 1/1.</text>
</comment>
<comment type="pathway">
    <text>Carbohydrate acid metabolism; tartrate degradation; 2-hydroxy-3-oxosuccinate from meso-tartrate: step 1/1.</text>
</comment>
<comment type="pathway">
    <text>Carbohydrate acid metabolism; tartrate degradation; D-glycerate from L-tartrate: step 1/1.</text>
</comment>
<comment type="subcellular location">
    <subcellularLocation>
        <location evidence="1">Cytoplasm</location>
    </subcellularLocation>
</comment>
<comment type="induction">
    <text>By tartrate.</text>
</comment>
<comment type="similarity">
    <text evidence="4">Belongs to the isocitrate and isopropylmalate dehydrogenases family.</text>
</comment>
<accession>O34296</accession>
<gene>
    <name type="primary">ttuC'</name>
</gene>
<keyword id="KW-0963">Cytoplasm</keyword>
<keyword id="KW-0456">Lyase</keyword>
<keyword id="KW-0464">Manganese</keyword>
<keyword id="KW-0479">Metal-binding</keyword>
<keyword id="KW-0520">NAD</keyword>
<keyword id="KW-0560">Oxidoreductase</keyword>
<keyword id="KW-0614">Plasmid</keyword>
<reference key="1">
    <citation type="submission" date="1997-06" db="EMBL/GenBank/DDBJ databases">
        <authorList>
            <person name="Salomone J.-Y."/>
            <person name="Szegedi E."/>
            <person name="Cobanov P."/>
            <person name="Otten L."/>
        </authorList>
    </citation>
    <scope>NUCLEOTIDE SEQUENCE [GENOMIC DNA]</scope>
    <source>
        <strain>AB3</strain>
    </source>
</reference>
<geneLocation type="plasmid">
    <name>pTiAB3</name>
</geneLocation>
<feature type="chain" id="PRO_0000083815" description="Probable tartrate dehydrogenase/decarboxylase TtuC'">
    <location>
        <begin position="1"/>
        <end position="358"/>
    </location>
</feature>
<feature type="binding site" evidence="2">
    <location>
        <position position="222"/>
    </location>
    <ligand>
        <name>Mn(2+)</name>
        <dbReference type="ChEBI" id="CHEBI:29035"/>
    </ligand>
</feature>
<feature type="binding site" evidence="2">
    <location>
        <position position="246"/>
    </location>
    <ligand>
        <name>Mn(2+)</name>
        <dbReference type="ChEBI" id="CHEBI:29035"/>
    </ligand>
</feature>
<feature type="binding site" evidence="2">
    <location>
        <position position="250"/>
    </location>
    <ligand>
        <name>Mn(2+)</name>
        <dbReference type="ChEBI" id="CHEBI:29035"/>
    </ligand>
</feature>
<name>TTUC3_AGRVI</name>